<feature type="chain" id="PRO_0000283154" description="Putative FBD-associated F-box protein At5g56390">
    <location>
        <begin position="1"/>
        <end position="428"/>
    </location>
</feature>
<feature type="domain" description="F-box">
    <location>
        <begin position="2"/>
        <end position="50"/>
    </location>
</feature>
<feature type="domain" description="FBD">
    <location>
        <begin position="344"/>
        <end position="394"/>
    </location>
</feature>
<sequence>MDKISQLHDELLLGILSLLPNAKDVVATMVLSKRWRYLWMMVPSLVYDDSYQDIDYGRFSRFVDRSLALHKAPVIDTLHFKLGHICGSGDTLIGAAEKCCVRKLIIKIDDTSSRSSKTDQVILPMSLCSGVHIMLADLKLQNVVLVDVSTPVSFPSLKRLRLKSVKYPGNEFVNNLISSCPVLEDLVVKQCSDDNVTILTVRVPSLKRLSLIQRAELEIDVPHDFVIDTPSLEHLKIVDYTYGSRVVKSTMNRIITASMDVFSPQTKEILGSLTSTKRLFLCLPTSKDAYPVGNIFGSLIHLTICTCETEWLNVLIRVLRDSPNLKTLKIEQYHNLRDEDPRPCWNETSLVPEYLLPSLETFEWVDYEGTKTEKQVVAFILRIASCLKQATIVSFKYIDHDKKLEMLNDFPVSSRRSPACMLAFSWNL</sequence>
<keyword id="KW-1185">Reference proteome</keyword>
<organism>
    <name type="scientific">Arabidopsis thaliana</name>
    <name type="common">Mouse-ear cress</name>
    <dbReference type="NCBI Taxonomy" id="3702"/>
    <lineage>
        <taxon>Eukaryota</taxon>
        <taxon>Viridiplantae</taxon>
        <taxon>Streptophyta</taxon>
        <taxon>Embryophyta</taxon>
        <taxon>Tracheophyta</taxon>
        <taxon>Spermatophyta</taxon>
        <taxon>Magnoliopsida</taxon>
        <taxon>eudicotyledons</taxon>
        <taxon>Gunneridae</taxon>
        <taxon>Pentapetalae</taxon>
        <taxon>rosids</taxon>
        <taxon>malvids</taxon>
        <taxon>Brassicales</taxon>
        <taxon>Brassicaceae</taxon>
        <taxon>Camelineae</taxon>
        <taxon>Arabidopsis</taxon>
    </lineage>
</organism>
<name>FBD22_ARATH</name>
<accession>Q9FM92</accession>
<reference key="1">
    <citation type="journal article" date="1998" name="DNA Res.">
        <title>Structural analysis of Arabidopsis thaliana chromosome 5. IV. Sequence features of the regions of 1,456,315 bp covered by nineteen physically assigned P1 and TAC clones.</title>
        <authorList>
            <person name="Sato S."/>
            <person name="Kaneko T."/>
            <person name="Kotani H."/>
            <person name="Nakamura Y."/>
            <person name="Asamizu E."/>
            <person name="Miyajima N."/>
            <person name="Tabata S."/>
        </authorList>
    </citation>
    <scope>NUCLEOTIDE SEQUENCE [LARGE SCALE GENOMIC DNA]</scope>
    <source>
        <strain>cv. Columbia</strain>
    </source>
</reference>
<reference key="2">
    <citation type="journal article" date="2017" name="Plant J.">
        <title>Araport11: a complete reannotation of the Arabidopsis thaliana reference genome.</title>
        <authorList>
            <person name="Cheng C.Y."/>
            <person name="Krishnakumar V."/>
            <person name="Chan A.P."/>
            <person name="Thibaud-Nissen F."/>
            <person name="Schobel S."/>
            <person name="Town C.D."/>
        </authorList>
    </citation>
    <scope>GENOME REANNOTATION</scope>
    <source>
        <strain>cv. Columbia</strain>
    </source>
</reference>
<gene>
    <name type="ordered locus">At5g56390</name>
    <name type="ORF">MCD7.15</name>
</gene>
<dbReference type="EMBL" id="AB009049">
    <property type="protein sequence ID" value="BAB11267.1"/>
    <property type="molecule type" value="Genomic_DNA"/>
</dbReference>
<dbReference type="EMBL" id="CP002688">
    <property type="protein sequence ID" value="AED96759.1"/>
    <property type="molecule type" value="Genomic_DNA"/>
</dbReference>
<dbReference type="RefSeq" id="NP_200450.1">
    <property type="nucleotide sequence ID" value="NM_125022.1"/>
</dbReference>
<dbReference type="PaxDb" id="3702-AT5G56390.1"/>
<dbReference type="EnsemblPlants" id="AT5G56390.1">
    <property type="protein sequence ID" value="AT5G56390.1"/>
    <property type="gene ID" value="AT5G56390"/>
</dbReference>
<dbReference type="GeneID" id="835740"/>
<dbReference type="Gramene" id="AT5G56390.1">
    <property type="protein sequence ID" value="AT5G56390.1"/>
    <property type="gene ID" value="AT5G56390"/>
</dbReference>
<dbReference type="KEGG" id="ath:AT5G56390"/>
<dbReference type="Araport" id="AT5G56390"/>
<dbReference type="TAIR" id="AT5G56390"/>
<dbReference type="HOGENOM" id="CLU_010721_1_2_1"/>
<dbReference type="InParanoid" id="Q9FM92"/>
<dbReference type="OMA" id="MEVCEYC"/>
<dbReference type="PhylomeDB" id="Q9FM92"/>
<dbReference type="PRO" id="PR:Q9FM92"/>
<dbReference type="Proteomes" id="UP000006548">
    <property type="component" value="Chromosome 5"/>
</dbReference>
<dbReference type="Gene3D" id="3.80.10.10">
    <property type="entry name" value="Ribonuclease Inhibitor"/>
    <property type="match status" value="1"/>
</dbReference>
<dbReference type="InterPro" id="IPR036047">
    <property type="entry name" value="F-box-like_dom_sf"/>
</dbReference>
<dbReference type="InterPro" id="IPR001810">
    <property type="entry name" value="F-box_dom"/>
</dbReference>
<dbReference type="InterPro" id="IPR006566">
    <property type="entry name" value="FBD"/>
</dbReference>
<dbReference type="InterPro" id="IPR050232">
    <property type="entry name" value="FBL13/AtMIF1-like"/>
</dbReference>
<dbReference type="InterPro" id="IPR032675">
    <property type="entry name" value="LRR_dom_sf"/>
</dbReference>
<dbReference type="InterPro" id="IPR055411">
    <property type="entry name" value="LRR_FXL15/At3g58940/PEG3-like"/>
</dbReference>
<dbReference type="PANTHER" id="PTHR31900">
    <property type="entry name" value="F-BOX/RNI SUPERFAMILY PROTEIN-RELATED"/>
    <property type="match status" value="1"/>
</dbReference>
<dbReference type="PANTHER" id="PTHR31900:SF29">
    <property type="entry name" value="FBD-LIKE DOMAIN FAMILY PROTEIN"/>
    <property type="match status" value="1"/>
</dbReference>
<dbReference type="Pfam" id="PF00646">
    <property type="entry name" value="F-box"/>
    <property type="match status" value="1"/>
</dbReference>
<dbReference type="Pfam" id="PF08387">
    <property type="entry name" value="FBD"/>
    <property type="match status" value="1"/>
</dbReference>
<dbReference type="Pfam" id="PF24758">
    <property type="entry name" value="LRR_At5g56370"/>
    <property type="match status" value="1"/>
</dbReference>
<dbReference type="SMART" id="SM00579">
    <property type="entry name" value="FBD"/>
    <property type="match status" value="1"/>
</dbReference>
<dbReference type="SUPFAM" id="SSF81383">
    <property type="entry name" value="F-box domain"/>
    <property type="match status" value="1"/>
</dbReference>
<dbReference type="SUPFAM" id="SSF52047">
    <property type="entry name" value="RNI-like"/>
    <property type="match status" value="1"/>
</dbReference>
<proteinExistence type="predicted"/>
<protein>
    <recommendedName>
        <fullName>Putative FBD-associated F-box protein At5g56390</fullName>
    </recommendedName>
</protein>